<reference key="1">
    <citation type="journal article" date="1997" name="Nature">
        <title>The complete genome sequence of the hyperthermophilic, sulphate-reducing archaeon Archaeoglobus fulgidus.</title>
        <authorList>
            <person name="Klenk H.-P."/>
            <person name="Clayton R.A."/>
            <person name="Tomb J.-F."/>
            <person name="White O."/>
            <person name="Nelson K.E."/>
            <person name="Ketchum K.A."/>
            <person name="Dodson R.J."/>
            <person name="Gwinn M.L."/>
            <person name="Hickey E.K."/>
            <person name="Peterson J.D."/>
            <person name="Richardson D.L."/>
            <person name="Kerlavage A.R."/>
            <person name="Graham D.E."/>
            <person name="Kyrpides N.C."/>
            <person name="Fleischmann R.D."/>
            <person name="Quackenbush J."/>
            <person name="Lee N.H."/>
            <person name="Sutton G.G."/>
            <person name="Gill S.R."/>
            <person name="Kirkness E.F."/>
            <person name="Dougherty B.A."/>
            <person name="McKenney K."/>
            <person name="Adams M.D."/>
            <person name="Loftus B.J."/>
            <person name="Peterson S.N."/>
            <person name="Reich C.I."/>
            <person name="McNeil L.K."/>
            <person name="Badger J.H."/>
            <person name="Glodek A."/>
            <person name="Zhou L."/>
            <person name="Overbeek R."/>
            <person name="Gocayne J.D."/>
            <person name="Weidman J.F."/>
            <person name="McDonald L.A."/>
            <person name="Utterback T.R."/>
            <person name="Cotton M.D."/>
            <person name="Spriggs T."/>
            <person name="Artiach P."/>
            <person name="Kaine B.P."/>
            <person name="Sykes S.M."/>
            <person name="Sadow P.W."/>
            <person name="D'Andrea K.P."/>
            <person name="Bowman C."/>
            <person name="Fujii C."/>
            <person name="Garland S.A."/>
            <person name="Mason T.M."/>
            <person name="Olsen G.J."/>
            <person name="Fraser C.M."/>
            <person name="Smith H.O."/>
            <person name="Woese C.R."/>
            <person name="Venter J.C."/>
        </authorList>
    </citation>
    <scope>NUCLEOTIDE SEQUENCE [LARGE SCALE GENOMIC DNA]</scope>
    <source>
        <strain>ATCC 49558 / DSM 4304 / JCM 9628 / NBRC 100126 / VC-16</strain>
    </source>
</reference>
<evidence type="ECO:0000255" key="1">
    <source>
        <dbReference type="HAMAP-Rule" id="MF_01086"/>
    </source>
</evidence>
<proteinExistence type="inferred from homology"/>
<protein>
    <recommendedName>
        <fullName evidence="1">UPF0284 protein AF_0276</fullName>
    </recommendedName>
</protein>
<gene>
    <name type="ordered locus">AF_0276</name>
</gene>
<keyword id="KW-1185">Reference proteome</keyword>
<comment type="similarity">
    <text evidence="1">Belongs to the UPF0284 family.</text>
</comment>
<dbReference type="EMBL" id="AE000782">
    <property type="protein sequence ID" value="AAB90956.1"/>
    <property type="molecule type" value="Genomic_DNA"/>
</dbReference>
<dbReference type="PIR" id="D69284">
    <property type="entry name" value="D69284"/>
</dbReference>
<dbReference type="SMR" id="O29963"/>
<dbReference type="STRING" id="224325.AF_0276"/>
<dbReference type="PaxDb" id="224325-AF_0276"/>
<dbReference type="DNASU" id="1483491"/>
<dbReference type="EnsemblBacteria" id="AAB90956">
    <property type="protein sequence ID" value="AAB90956"/>
    <property type="gene ID" value="AF_0276"/>
</dbReference>
<dbReference type="KEGG" id="afu:AF_0276"/>
<dbReference type="eggNOG" id="arCOG04272">
    <property type="taxonomic scope" value="Archaea"/>
</dbReference>
<dbReference type="HOGENOM" id="CLU_053134_0_0_2"/>
<dbReference type="OrthoDB" id="9136at2157"/>
<dbReference type="PhylomeDB" id="O29963"/>
<dbReference type="Proteomes" id="UP000002199">
    <property type="component" value="Chromosome"/>
</dbReference>
<dbReference type="GO" id="GO:0008939">
    <property type="term" value="F:nicotinate-nucleotide-dimethylbenzimidazole phosphoribosyltransferase activity"/>
    <property type="evidence" value="ECO:0007669"/>
    <property type="project" value="InterPro"/>
</dbReference>
<dbReference type="CDD" id="cd02439">
    <property type="entry name" value="DMB-PRT_CobT"/>
    <property type="match status" value="1"/>
</dbReference>
<dbReference type="Gene3D" id="3.40.50.10210">
    <property type="match status" value="1"/>
</dbReference>
<dbReference type="HAMAP" id="MF_01086">
    <property type="entry name" value="UPF0284"/>
    <property type="match status" value="1"/>
</dbReference>
<dbReference type="InterPro" id="IPR003200">
    <property type="entry name" value="Nict_dMeBzImd_PRibTrfase"/>
</dbReference>
<dbReference type="InterPro" id="IPR002805">
    <property type="entry name" value="Nict_dMeBzImd_PRibTrfase_arc"/>
</dbReference>
<dbReference type="InterPro" id="IPR036087">
    <property type="entry name" value="Nict_dMeBzImd_PRibTrfase_sf"/>
</dbReference>
<dbReference type="NCBIfam" id="TIGR00303">
    <property type="entry name" value="nicotinate mononucleotide-dependent phosphoribosyltransferase CobT"/>
    <property type="match status" value="1"/>
</dbReference>
<dbReference type="NCBIfam" id="NF003372">
    <property type="entry name" value="PRK04447.1-5"/>
    <property type="match status" value="1"/>
</dbReference>
<dbReference type="PANTHER" id="PTHR38811">
    <property type="match status" value="1"/>
</dbReference>
<dbReference type="PANTHER" id="PTHR38811:SF1">
    <property type="entry name" value="UPF0284 PROTEIN SLL1500"/>
    <property type="match status" value="1"/>
</dbReference>
<dbReference type="Pfam" id="PF02277">
    <property type="entry name" value="DBI_PRT"/>
    <property type="match status" value="1"/>
</dbReference>
<dbReference type="SUPFAM" id="SSF52733">
    <property type="entry name" value="Nicotinate mononucleotide:5,6-dimethylbenzimidazole phosphoribosyltransferase (CobT)"/>
    <property type="match status" value="1"/>
</dbReference>
<accession>O29963</accession>
<sequence>MTLKFVKGESDNLELAKGRAAFVLVIGNTKTANIEGITVAGANPELIKYTPPADAELLYHGKCLSIDGVPATPDGKPTPALITYTALRLTSIPLFVVNSGLMVPPKIPYIDLNAPVGENIAESRAMDREKVEEVLERAKIVGRQLSKLSDVLIIGESIPAGTTTAAAVLKALGLNAAVSSSMPENPVELKRKVVERAVERVESNDPIEVLSAVGDPVMVGVAGIALGSEKPVILAGGTQMVAIANLIARMGEVEAVIATTKYVASDATADLSLSPFPVIASDPMLGKSRYPGLRAYEEGFVKEGVGAGGMTSVAYARGITPEKFLEEVEKDYERIVL</sequence>
<name>Y276_ARCFU</name>
<organism>
    <name type="scientific">Archaeoglobus fulgidus (strain ATCC 49558 / DSM 4304 / JCM 9628 / NBRC 100126 / VC-16)</name>
    <dbReference type="NCBI Taxonomy" id="224325"/>
    <lineage>
        <taxon>Archaea</taxon>
        <taxon>Methanobacteriati</taxon>
        <taxon>Methanobacteriota</taxon>
        <taxon>Archaeoglobi</taxon>
        <taxon>Archaeoglobales</taxon>
        <taxon>Archaeoglobaceae</taxon>
        <taxon>Archaeoglobus</taxon>
    </lineage>
</organism>
<feature type="chain" id="PRO_0000151048" description="UPF0284 protein AF_0276">
    <location>
        <begin position="1"/>
        <end position="337"/>
    </location>
</feature>